<reference key="1">
    <citation type="journal article" date="2002" name="Nature">
        <title>The genome sequence of Schizosaccharomyces pombe.</title>
        <authorList>
            <person name="Wood V."/>
            <person name="Gwilliam R."/>
            <person name="Rajandream M.A."/>
            <person name="Lyne M.H."/>
            <person name="Lyne R."/>
            <person name="Stewart A."/>
            <person name="Sgouros J.G."/>
            <person name="Peat N."/>
            <person name="Hayles J."/>
            <person name="Baker S.G."/>
            <person name="Basham D."/>
            <person name="Bowman S."/>
            <person name="Brooks K."/>
            <person name="Brown D."/>
            <person name="Brown S."/>
            <person name="Chillingworth T."/>
            <person name="Churcher C.M."/>
            <person name="Collins M."/>
            <person name="Connor R."/>
            <person name="Cronin A."/>
            <person name="Davis P."/>
            <person name="Feltwell T."/>
            <person name="Fraser A."/>
            <person name="Gentles S."/>
            <person name="Goble A."/>
            <person name="Hamlin N."/>
            <person name="Harris D.E."/>
            <person name="Hidalgo J."/>
            <person name="Hodgson G."/>
            <person name="Holroyd S."/>
            <person name="Hornsby T."/>
            <person name="Howarth S."/>
            <person name="Huckle E.J."/>
            <person name="Hunt S."/>
            <person name="Jagels K."/>
            <person name="James K.D."/>
            <person name="Jones L."/>
            <person name="Jones M."/>
            <person name="Leather S."/>
            <person name="McDonald S."/>
            <person name="McLean J."/>
            <person name="Mooney P."/>
            <person name="Moule S."/>
            <person name="Mungall K.L."/>
            <person name="Murphy L.D."/>
            <person name="Niblett D."/>
            <person name="Odell C."/>
            <person name="Oliver K."/>
            <person name="O'Neil S."/>
            <person name="Pearson D."/>
            <person name="Quail M.A."/>
            <person name="Rabbinowitsch E."/>
            <person name="Rutherford K.M."/>
            <person name="Rutter S."/>
            <person name="Saunders D."/>
            <person name="Seeger K."/>
            <person name="Sharp S."/>
            <person name="Skelton J."/>
            <person name="Simmonds M.N."/>
            <person name="Squares R."/>
            <person name="Squares S."/>
            <person name="Stevens K."/>
            <person name="Taylor K."/>
            <person name="Taylor R.G."/>
            <person name="Tivey A."/>
            <person name="Walsh S.V."/>
            <person name="Warren T."/>
            <person name="Whitehead S."/>
            <person name="Woodward J.R."/>
            <person name="Volckaert G."/>
            <person name="Aert R."/>
            <person name="Robben J."/>
            <person name="Grymonprez B."/>
            <person name="Weltjens I."/>
            <person name="Vanstreels E."/>
            <person name="Rieger M."/>
            <person name="Schaefer M."/>
            <person name="Mueller-Auer S."/>
            <person name="Gabel C."/>
            <person name="Fuchs M."/>
            <person name="Duesterhoeft A."/>
            <person name="Fritzc C."/>
            <person name="Holzer E."/>
            <person name="Moestl D."/>
            <person name="Hilbert H."/>
            <person name="Borzym K."/>
            <person name="Langer I."/>
            <person name="Beck A."/>
            <person name="Lehrach H."/>
            <person name="Reinhardt R."/>
            <person name="Pohl T.M."/>
            <person name="Eger P."/>
            <person name="Zimmermann W."/>
            <person name="Wedler H."/>
            <person name="Wambutt R."/>
            <person name="Purnelle B."/>
            <person name="Goffeau A."/>
            <person name="Cadieu E."/>
            <person name="Dreano S."/>
            <person name="Gloux S."/>
            <person name="Lelaure V."/>
            <person name="Mottier S."/>
            <person name="Galibert F."/>
            <person name="Aves S.J."/>
            <person name="Xiang Z."/>
            <person name="Hunt C."/>
            <person name="Moore K."/>
            <person name="Hurst S.M."/>
            <person name="Lucas M."/>
            <person name="Rochet M."/>
            <person name="Gaillardin C."/>
            <person name="Tallada V.A."/>
            <person name="Garzon A."/>
            <person name="Thode G."/>
            <person name="Daga R.R."/>
            <person name="Cruzado L."/>
            <person name="Jimenez J."/>
            <person name="Sanchez M."/>
            <person name="del Rey F."/>
            <person name="Benito J."/>
            <person name="Dominguez A."/>
            <person name="Revuelta J.L."/>
            <person name="Moreno S."/>
            <person name="Armstrong J."/>
            <person name="Forsburg S.L."/>
            <person name="Cerutti L."/>
            <person name="Lowe T."/>
            <person name="McCombie W.R."/>
            <person name="Paulsen I."/>
            <person name="Potashkin J."/>
            <person name="Shpakovski G.V."/>
            <person name="Ussery D."/>
            <person name="Barrell B.G."/>
            <person name="Nurse P."/>
        </authorList>
    </citation>
    <scope>NUCLEOTIDE SEQUENCE [LARGE SCALE GENOMIC DNA]</scope>
    <source>
        <strain>972 / ATCC 24843</strain>
    </source>
</reference>
<reference key="2">
    <citation type="journal article" date="2006" name="Nat. Biotechnol.">
        <title>ORFeome cloning and global analysis of protein localization in the fission yeast Schizosaccharomyces pombe.</title>
        <authorList>
            <person name="Matsuyama A."/>
            <person name="Arai R."/>
            <person name="Yashiroda Y."/>
            <person name="Shirai A."/>
            <person name="Kamata A."/>
            <person name="Sekido S."/>
            <person name="Kobayashi Y."/>
            <person name="Hashimoto A."/>
            <person name="Hamamoto M."/>
            <person name="Hiraoka Y."/>
            <person name="Horinouchi S."/>
            <person name="Yoshida M."/>
        </authorList>
    </citation>
    <scope>SUBCELLULAR LOCATION [LARGE SCALE ANALYSIS]</scope>
</reference>
<organism>
    <name type="scientific">Schizosaccharomyces pombe (strain 972 / ATCC 24843)</name>
    <name type="common">Fission yeast</name>
    <dbReference type="NCBI Taxonomy" id="284812"/>
    <lineage>
        <taxon>Eukaryota</taxon>
        <taxon>Fungi</taxon>
        <taxon>Dikarya</taxon>
        <taxon>Ascomycota</taxon>
        <taxon>Taphrinomycotina</taxon>
        <taxon>Schizosaccharomycetes</taxon>
        <taxon>Schizosaccharomycetales</taxon>
        <taxon>Schizosaccharomycetaceae</taxon>
        <taxon>Schizosaccharomyces</taxon>
    </lineage>
</organism>
<sequence length="873" mass="98671">MSNKPDANDQCMVKETISRMSMSKEKPFLRRNYSSPSFNDSVNSVNDEFQTYQLPNGEFSDNMNDLYFPFRKGNESLMTENSNYPISEQDTQHNHISDFPSRRMQLDGMNHSNNDTYSTAIPFSKDSSVFDAVGQQSSVPIHINPAYTNSHQNSYSLNETYLSYDFFDNHRGASSSAVSKDGLASPRPTKDVDADDTTWYFTSSPSFQPLKDSDRSQTKNTHEETSPIVSSPEDDADAAFKPSSLPSTSISASSNAFYKPAAPDNERPLDPHITPYLRLQLLTTGADDNDIRKNALTQVDYLSYDWKETDIWASWREITKTKANYDNGIRLENASWRTWMKHKFKLKTISPETLNWLKECDVTWLYGPLLHTSMPSRHHSHRKKEKEKEKSKAPRVTPLTHKTNDDEANHSETSSGSSLAKKPILKRRTPQELLLSGRDLTPWPQIRRFDSLLARNRGDIFSNRNHATIRSALFSQRYPSHSKRHIHFNDRVQQCIAVDIDSLPSDSESASYNTDDANSVVSPSKDGISTTTVSSDATRSSQSSHFRIIEDLPDSKLKYSLEDQATYDQSSRYPGRHFGKTGRSHFPRAPEYYGENDFEEDEVYRDDRHYENEHDEYDPNLIYYDNEPTEENRLVFEDTNNTFIDTDSDDSNADESQFLEYANDSPNSSESLESLNNQSYSSSPYSVFSHPPPYMGRQSLNDSPQTSDFKASNLNDSSSNVHSIFQTRETTSPSVQNKTPTKYHRELKSSKDGHEQASPLVSSSPSGSFTSQISPAATTTATNLDAVSLSPSTVRTGSQISDIGNDAISTTRKTVRAFLENANPYSTNNDGNPSNNTSDVEVNETSMNDNSEEPISSNWLVDLFQKSLKSFRE</sequence>
<accession>Q9UTC4</accession>
<gene>
    <name type="ORF">SPAC227.15</name>
</gene>
<protein>
    <recommendedName>
        <fullName>Uncharacterized protein C227.15</fullName>
    </recommendedName>
</protein>
<proteinExistence type="predicted"/>
<evidence type="ECO:0000256" key="1">
    <source>
        <dbReference type="SAM" id="MobiDB-lite"/>
    </source>
</evidence>
<evidence type="ECO:0000269" key="2">
    <source>
    </source>
</evidence>
<keyword id="KW-0963">Cytoplasm</keyword>
<keyword id="KW-0472">Membrane</keyword>
<keyword id="KW-1185">Reference proteome</keyword>
<keyword id="KW-0926">Vacuole</keyword>
<dbReference type="EMBL" id="CU329670">
    <property type="protein sequence ID" value="CAB61464.1"/>
    <property type="molecule type" value="Genomic_DNA"/>
</dbReference>
<dbReference type="PIR" id="T50171">
    <property type="entry name" value="T50171"/>
</dbReference>
<dbReference type="BioGRID" id="277996">
    <property type="interactions" value="3"/>
</dbReference>
<dbReference type="STRING" id="284812.Q9UTC4"/>
<dbReference type="iPTMnet" id="Q9UTC4"/>
<dbReference type="PaxDb" id="4896-SPAC227.15.1"/>
<dbReference type="EnsemblFungi" id="SPAC227.15.1">
    <property type="protein sequence ID" value="SPAC227.15.1:pep"/>
    <property type="gene ID" value="SPAC227.15"/>
</dbReference>
<dbReference type="KEGG" id="spo:2541494"/>
<dbReference type="PomBase" id="SPAC227.15"/>
<dbReference type="VEuPathDB" id="FungiDB:SPAC227.15"/>
<dbReference type="eggNOG" id="ENOG502QSII">
    <property type="taxonomic scope" value="Eukaryota"/>
</dbReference>
<dbReference type="HOGENOM" id="CLU_329038_0_0_1"/>
<dbReference type="InParanoid" id="Q9UTC4"/>
<dbReference type="OMA" id="EYANDSP"/>
<dbReference type="PRO" id="PR:Q9UTC4"/>
<dbReference type="Proteomes" id="UP000002485">
    <property type="component" value="Chromosome I"/>
</dbReference>
<dbReference type="GO" id="GO:0005737">
    <property type="term" value="C:cytoplasm"/>
    <property type="evidence" value="ECO:0007005"/>
    <property type="project" value="PomBase"/>
</dbReference>
<dbReference type="GO" id="GO:0005829">
    <property type="term" value="C:cytosol"/>
    <property type="evidence" value="ECO:0007005"/>
    <property type="project" value="PomBase"/>
</dbReference>
<dbReference type="GO" id="GO:0000329">
    <property type="term" value="C:fungal-type vacuole membrane"/>
    <property type="evidence" value="ECO:0007005"/>
    <property type="project" value="PomBase"/>
</dbReference>
<dbReference type="GO" id="GO:0000164">
    <property type="term" value="C:protein phosphatase type 1 complex"/>
    <property type="evidence" value="ECO:0000266"/>
    <property type="project" value="PomBase"/>
</dbReference>
<dbReference type="GO" id="GO:0019888">
    <property type="term" value="F:protein phosphatase regulator activity"/>
    <property type="evidence" value="ECO:0000266"/>
    <property type="project" value="PomBase"/>
</dbReference>
<dbReference type="GO" id="GO:0042149">
    <property type="term" value="P:cellular response to glucose starvation"/>
    <property type="evidence" value="ECO:0000318"/>
    <property type="project" value="GO_Central"/>
</dbReference>
<dbReference type="GO" id="GO:0007039">
    <property type="term" value="P:protein catabolic process in the vacuole"/>
    <property type="evidence" value="ECO:0000318"/>
    <property type="project" value="GO_Central"/>
</dbReference>
<dbReference type="GO" id="GO:0006109">
    <property type="term" value="P:regulation of carbohydrate metabolic process"/>
    <property type="evidence" value="ECO:0000266"/>
    <property type="project" value="PomBase"/>
</dbReference>
<dbReference type="GO" id="GO:0023052">
    <property type="term" value="P:signaling"/>
    <property type="evidence" value="ECO:0000303"/>
    <property type="project" value="PomBase"/>
</dbReference>
<dbReference type="InterPro" id="IPR013860">
    <property type="entry name" value="AreA_GATA"/>
</dbReference>
<dbReference type="InterPro" id="IPR052292">
    <property type="entry name" value="Glucose_repression_reg"/>
</dbReference>
<dbReference type="PANTHER" id="PTHR28051">
    <property type="entry name" value="PROTEIN MTL1-RELATED"/>
    <property type="match status" value="1"/>
</dbReference>
<dbReference type="PANTHER" id="PTHR28051:SF1">
    <property type="entry name" value="PROTEIN MTL1-RELATED"/>
    <property type="match status" value="1"/>
</dbReference>
<dbReference type="Pfam" id="PF08550">
    <property type="entry name" value="GATA_AreA"/>
    <property type="match status" value="1"/>
</dbReference>
<feature type="chain" id="PRO_0000358935" description="Uncharacterized protein C227.15">
    <location>
        <begin position="1"/>
        <end position="873"/>
    </location>
</feature>
<feature type="region of interest" description="Disordered" evidence="1">
    <location>
        <begin position="1"/>
        <end position="24"/>
    </location>
</feature>
<feature type="region of interest" description="Disordered" evidence="1">
    <location>
        <begin position="175"/>
        <end position="251"/>
    </location>
</feature>
<feature type="region of interest" description="Disordered" evidence="1">
    <location>
        <begin position="375"/>
        <end position="423"/>
    </location>
</feature>
<feature type="region of interest" description="Disordered" evidence="1">
    <location>
        <begin position="506"/>
        <end position="540"/>
    </location>
</feature>
<feature type="region of interest" description="Disordered" evidence="1">
    <location>
        <begin position="568"/>
        <end position="592"/>
    </location>
</feature>
<feature type="region of interest" description="Disordered" evidence="1">
    <location>
        <begin position="662"/>
        <end position="773"/>
    </location>
</feature>
<feature type="region of interest" description="Disordered" evidence="1">
    <location>
        <begin position="822"/>
        <end position="855"/>
    </location>
</feature>
<feature type="compositionally biased region" description="Basic and acidic residues" evidence="1">
    <location>
        <begin position="211"/>
        <end position="225"/>
    </location>
</feature>
<feature type="compositionally biased region" description="Basic residues" evidence="1">
    <location>
        <begin position="376"/>
        <end position="385"/>
    </location>
</feature>
<feature type="compositionally biased region" description="Basic residues" evidence="1">
    <location>
        <begin position="574"/>
        <end position="586"/>
    </location>
</feature>
<feature type="compositionally biased region" description="Low complexity" evidence="1">
    <location>
        <begin position="665"/>
        <end position="686"/>
    </location>
</feature>
<feature type="compositionally biased region" description="Polar residues" evidence="1">
    <location>
        <begin position="698"/>
        <end position="740"/>
    </location>
</feature>
<feature type="compositionally biased region" description="Basic and acidic residues" evidence="1">
    <location>
        <begin position="743"/>
        <end position="755"/>
    </location>
</feature>
<feature type="compositionally biased region" description="Low complexity" evidence="1">
    <location>
        <begin position="758"/>
        <end position="773"/>
    </location>
</feature>
<feature type="compositionally biased region" description="Polar residues" evidence="1">
    <location>
        <begin position="823"/>
        <end position="855"/>
    </location>
</feature>
<name>YIDF_SCHPO</name>
<comment type="subcellular location">
    <subcellularLocation>
        <location evidence="2">Cytoplasm</location>
    </subcellularLocation>
    <subcellularLocation>
        <location evidence="2">Vacuole membrane</location>
    </subcellularLocation>
</comment>